<organism>
    <name type="scientific">Solidesulfovibrio magneticus (strain ATCC 700980 / DSM 13731 / RS-1)</name>
    <name type="common">Desulfovibrio magneticus</name>
    <dbReference type="NCBI Taxonomy" id="573370"/>
    <lineage>
        <taxon>Bacteria</taxon>
        <taxon>Pseudomonadati</taxon>
        <taxon>Thermodesulfobacteriota</taxon>
        <taxon>Desulfovibrionia</taxon>
        <taxon>Desulfovibrionales</taxon>
        <taxon>Desulfovibrionaceae</taxon>
        <taxon>Solidesulfovibrio</taxon>
    </lineage>
</organism>
<proteinExistence type="inferred from homology"/>
<evidence type="ECO:0000255" key="1">
    <source>
        <dbReference type="HAMAP-Rule" id="MF_01633"/>
    </source>
</evidence>
<name>QUEC_SOLM1</name>
<dbReference type="EC" id="6.3.4.20" evidence="1"/>
<dbReference type="EMBL" id="AP010904">
    <property type="protein sequence ID" value="BAH75174.1"/>
    <property type="molecule type" value="Genomic_DNA"/>
</dbReference>
<dbReference type="RefSeq" id="WP_015860375.1">
    <property type="nucleotide sequence ID" value="NC_012796.1"/>
</dbReference>
<dbReference type="SMR" id="C4XPJ3"/>
<dbReference type="STRING" id="573370.DMR_16830"/>
<dbReference type="KEGG" id="dma:DMR_16830"/>
<dbReference type="eggNOG" id="COG0603">
    <property type="taxonomic scope" value="Bacteria"/>
</dbReference>
<dbReference type="HOGENOM" id="CLU_081854_1_1_7"/>
<dbReference type="OrthoDB" id="9789567at2"/>
<dbReference type="UniPathway" id="UPA00391"/>
<dbReference type="Proteomes" id="UP000009071">
    <property type="component" value="Chromosome"/>
</dbReference>
<dbReference type="GO" id="GO:0005524">
    <property type="term" value="F:ATP binding"/>
    <property type="evidence" value="ECO:0007669"/>
    <property type="project" value="UniProtKB-UniRule"/>
</dbReference>
<dbReference type="GO" id="GO:0016879">
    <property type="term" value="F:ligase activity, forming carbon-nitrogen bonds"/>
    <property type="evidence" value="ECO:0007669"/>
    <property type="project" value="UniProtKB-UniRule"/>
</dbReference>
<dbReference type="GO" id="GO:0008270">
    <property type="term" value="F:zinc ion binding"/>
    <property type="evidence" value="ECO:0007669"/>
    <property type="project" value="UniProtKB-UniRule"/>
</dbReference>
<dbReference type="GO" id="GO:0008616">
    <property type="term" value="P:queuosine biosynthetic process"/>
    <property type="evidence" value="ECO:0007669"/>
    <property type="project" value="UniProtKB-UniRule"/>
</dbReference>
<dbReference type="CDD" id="cd01995">
    <property type="entry name" value="QueC-like"/>
    <property type="match status" value="1"/>
</dbReference>
<dbReference type="Gene3D" id="3.40.50.620">
    <property type="entry name" value="HUPs"/>
    <property type="match status" value="1"/>
</dbReference>
<dbReference type="HAMAP" id="MF_01633">
    <property type="entry name" value="QueC"/>
    <property type="match status" value="1"/>
</dbReference>
<dbReference type="InterPro" id="IPR018317">
    <property type="entry name" value="QueC"/>
</dbReference>
<dbReference type="InterPro" id="IPR014729">
    <property type="entry name" value="Rossmann-like_a/b/a_fold"/>
</dbReference>
<dbReference type="NCBIfam" id="TIGR00364">
    <property type="entry name" value="7-cyano-7-deazaguanine synthase QueC"/>
    <property type="match status" value="1"/>
</dbReference>
<dbReference type="PANTHER" id="PTHR42914">
    <property type="entry name" value="7-CYANO-7-DEAZAGUANINE SYNTHASE"/>
    <property type="match status" value="1"/>
</dbReference>
<dbReference type="PANTHER" id="PTHR42914:SF1">
    <property type="entry name" value="7-CYANO-7-DEAZAGUANINE SYNTHASE"/>
    <property type="match status" value="1"/>
</dbReference>
<dbReference type="Pfam" id="PF06508">
    <property type="entry name" value="QueC"/>
    <property type="match status" value="1"/>
</dbReference>
<dbReference type="PIRSF" id="PIRSF006293">
    <property type="entry name" value="ExsB"/>
    <property type="match status" value="1"/>
</dbReference>
<dbReference type="SUPFAM" id="SSF52402">
    <property type="entry name" value="Adenine nucleotide alpha hydrolases-like"/>
    <property type="match status" value="1"/>
</dbReference>
<keyword id="KW-0067">ATP-binding</keyword>
<keyword id="KW-0436">Ligase</keyword>
<keyword id="KW-0479">Metal-binding</keyword>
<keyword id="KW-0547">Nucleotide-binding</keyword>
<keyword id="KW-0671">Queuosine biosynthesis</keyword>
<keyword id="KW-0862">Zinc</keyword>
<reference key="1">
    <citation type="journal article" date="2009" name="Genome Res.">
        <title>Whole genome sequence of Desulfovibrio magneticus strain RS-1 revealed common gene clusters in magnetotactic bacteria.</title>
        <authorList>
            <person name="Nakazawa H."/>
            <person name="Arakaki A."/>
            <person name="Narita-Yamada S."/>
            <person name="Yashiro I."/>
            <person name="Jinno K."/>
            <person name="Aoki N."/>
            <person name="Tsuruyama A."/>
            <person name="Okamura Y."/>
            <person name="Tanikawa S."/>
            <person name="Fujita N."/>
            <person name="Takeyama H."/>
            <person name="Matsunaga T."/>
        </authorList>
    </citation>
    <scope>NUCLEOTIDE SEQUENCE [LARGE SCALE GENOMIC DNA]</scope>
    <source>
        <strain>ATCC 700980 / DSM 13731 / RS-1</strain>
    </source>
</reference>
<feature type="chain" id="PRO_1000215788" description="7-cyano-7-deazaguanine synthase">
    <location>
        <begin position="1"/>
        <end position="235"/>
    </location>
</feature>
<feature type="binding site" evidence="1">
    <location>
        <begin position="13"/>
        <end position="23"/>
    </location>
    <ligand>
        <name>ATP</name>
        <dbReference type="ChEBI" id="CHEBI:30616"/>
    </ligand>
</feature>
<feature type="binding site" evidence="1">
    <location>
        <position position="197"/>
    </location>
    <ligand>
        <name>Zn(2+)</name>
        <dbReference type="ChEBI" id="CHEBI:29105"/>
    </ligand>
</feature>
<feature type="binding site" evidence="1">
    <location>
        <position position="207"/>
    </location>
    <ligand>
        <name>Zn(2+)</name>
        <dbReference type="ChEBI" id="CHEBI:29105"/>
    </ligand>
</feature>
<feature type="binding site" evidence="1">
    <location>
        <position position="210"/>
    </location>
    <ligand>
        <name>Zn(2+)</name>
        <dbReference type="ChEBI" id="CHEBI:29105"/>
    </ligand>
</feature>
<feature type="binding site" evidence="1">
    <location>
        <position position="213"/>
    </location>
    <ligand>
        <name>Zn(2+)</name>
        <dbReference type="ChEBI" id="CHEBI:29105"/>
    </ligand>
</feature>
<gene>
    <name evidence="1" type="primary">queC</name>
    <name type="ordered locus">DMR_16830</name>
</gene>
<sequence length="235" mass="25098">MTTDAPQKAVVLFSGGLDSTTCLAVARRDGFLPCALSFEYGQRHKVELEAARRVAKAMAVTTHLILPLPLGSIGGSALTADIDVPKDRDIGEMEADIPVTYVPARNTIFLSMALGWAEVLGASDIYIGVNALDYSGYPDCRPEFIAAFEAMANLAVKEAVEGRLAIRIHTPLLHLSKAGIVELGTSLGVDYGLTHSCYDPAPDGLACGRCDSCLLRRKGFEEAGVADPTRYRPSL</sequence>
<accession>C4XPJ3</accession>
<protein>
    <recommendedName>
        <fullName evidence="1">7-cyano-7-deazaguanine synthase</fullName>
        <ecNumber evidence="1">6.3.4.20</ecNumber>
    </recommendedName>
    <alternativeName>
        <fullName evidence="1">7-cyano-7-carbaguanine synthase</fullName>
    </alternativeName>
    <alternativeName>
        <fullName evidence="1">PreQ(0) synthase</fullName>
    </alternativeName>
    <alternativeName>
        <fullName evidence="1">Queuosine biosynthesis protein QueC</fullName>
    </alternativeName>
</protein>
<comment type="function">
    <text evidence="1">Catalyzes the ATP-dependent conversion of 7-carboxy-7-deazaguanine (CDG) to 7-cyano-7-deazaguanine (preQ(0)).</text>
</comment>
<comment type="catalytic activity">
    <reaction evidence="1">
        <text>7-carboxy-7-deazaguanine + NH4(+) + ATP = 7-cyano-7-deazaguanine + ADP + phosphate + H2O + H(+)</text>
        <dbReference type="Rhea" id="RHEA:27982"/>
        <dbReference type="ChEBI" id="CHEBI:15377"/>
        <dbReference type="ChEBI" id="CHEBI:15378"/>
        <dbReference type="ChEBI" id="CHEBI:28938"/>
        <dbReference type="ChEBI" id="CHEBI:30616"/>
        <dbReference type="ChEBI" id="CHEBI:43474"/>
        <dbReference type="ChEBI" id="CHEBI:45075"/>
        <dbReference type="ChEBI" id="CHEBI:61036"/>
        <dbReference type="ChEBI" id="CHEBI:456216"/>
        <dbReference type="EC" id="6.3.4.20"/>
    </reaction>
</comment>
<comment type="cofactor">
    <cofactor evidence="1">
        <name>Zn(2+)</name>
        <dbReference type="ChEBI" id="CHEBI:29105"/>
    </cofactor>
    <text evidence="1">Binds 1 zinc ion per subunit.</text>
</comment>
<comment type="pathway">
    <text evidence="1">Purine metabolism; 7-cyano-7-deazaguanine biosynthesis.</text>
</comment>
<comment type="similarity">
    <text evidence="1">Belongs to the QueC family.</text>
</comment>